<proteinExistence type="evidence at protein level"/>
<reference key="1">
    <citation type="journal article" date="1993" name="J. Cell Biol.">
        <title>Zeta-COP, a subunit of coatomer, is required for COP-coated vesicle assembly.</title>
        <authorList>
            <person name="Kuge O."/>
            <person name="Hara-Kuge S."/>
            <person name="Orci L."/>
            <person name="Ravazzola M."/>
            <person name="Amherdt M."/>
            <person name="Tanigawa G."/>
            <person name="Wieland F.T."/>
            <person name="Rothman J.E."/>
        </authorList>
    </citation>
    <scope>NUCLEOTIDE SEQUENCE [MRNA]</scope>
    <scope>PROTEIN SEQUENCE OF 55-70; 113-129 AND 146-160</scope>
    <source>
        <tissue>Liver</tissue>
    </source>
</reference>
<reference key="2">
    <citation type="journal article" date="2005" name="BMC Genomics">
        <title>Characterization of 954 bovine full-CDS cDNA sequences.</title>
        <authorList>
            <person name="Harhay G.P."/>
            <person name="Sonstegard T.S."/>
            <person name="Keele J.W."/>
            <person name="Heaton M.P."/>
            <person name="Clawson M.L."/>
            <person name="Snelling W.M."/>
            <person name="Wiedmann R.T."/>
            <person name="Van Tassell C.P."/>
            <person name="Smith T.P.L."/>
        </authorList>
    </citation>
    <scope>NUCLEOTIDE SEQUENCE [LARGE SCALE MRNA]</scope>
</reference>
<reference key="3">
    <citation type="submission" date="2005-08" db="EMBL/GenBank/DDBJ databases">
        <authorList>
            <consortium name="NIH - Mammalian Gene Collection (MGC) project"/>
        </authorList>
    </citation>
    <scope>NUCLEOTIDE SEQUENCE [LARGE SCALE MRNA]</scope>
    <source>
        <strain>Crossbred X Angus</strain>
        <tissue>Ileum</tissue>
    </source>
</reference>
<gene>
    <name type="primary">COPZ1</name>
    <name type="synonym">COPZ</name>
</gene>
<dbReference type="EMBL" id="X75935">
    <property type="protein sequence ID" value="CAA53539.1"/>
    <property type="molecule type" value="mRNA"/>
</dbReference>
<dbReference type="EMBL" id="BT020662">
    <property type="protein sequence ID" value="AAX08679.1"/>
    <property type="molecule type" value="mRNA"/>
</dbReference>
<dbReference type="EMBL" id="BT020725">
    <property type="protein sequence ID" value="AAX08742.1"/>
    <property type="molecule type" value="mRNA"/>
</dbReference>
<dbReference type="EMBL" id="BC102358">
    <property type="protein sequence ID" value="AAI02359.1"/>
    <property type="molecule type" value="mRNA"/>
</dbReference>
<dbReference type="PIR" id="A49465">
    <property type="entry name" value="A49465"/>
</dbReference>
<dbReference type="RefSeq" id="NP_776707.2">
    <property type="nucleotide sequence ID" value="NM_174282.3"/>
</dbReference>
<dbReference type="PDB" id="3TJZ">
    <property type="method" value="X-ray"/>
    <property type="resolution" value="2.90 A"/>
    <property type="chains" value="C/F=1-153"/>
</dbReference>
<dbReference type="PDBsum" id="3TJZ"/>
<dbReference type="BMRB" id="P35604"/>
<dbReference type="SMR" id="P35604"/>
<dbReference type="FunCoup" id="P35604">
    <property type="interactions" value="3683"/>
</dbReference>
<dbReference type="IntAct" id="P35604">
    <property type="interactions" value="1"/>
</dbReference>
<dbReference type="STRING" id="9913.ENSBTAP00000007088"/>
<dbReference type="PaxDb" id="9913-ENSBTAP00000007088"/>
<dbReference type="PeptideAtlas" id="P35604"/>
<dbReference type="GeneID" id="281707"/>
<dbReference type="KEGG" id="bta:281707"/>
<dbReference type="CTD" id="22818"/>
<dbReference type="VEuPathDB" id="HostDB:ENSBTAG00000005384"/>
<dbReference type="eggNOG" id="KOG3343">
    <property type="taxonomic scope" value="Eukaryota"/>
</dbReference>
<dbReference type="HOGENOM" id="CLU_086803_2_0_1"/>
<dbReference type="InParanoid" id="P35604"/>
<dbReference type="OMA" id="NELMLHS"/>
<dbReference type="OrthoDB" id="10249988at2759"/>
<dbReference type="TreeFam" id="TF300262"/>
<dbReference type="Reactome" id="R-BTA-6807878">
    <property type="pathway name" value="COPI-mediated anterograde transport"/>
</dbReference>
<dbReference type="Reactome" id="R-BTA-6811434">
    <property type="pathway name" value="COPI-dependent Golgi-to-ER retrograde traffic"/>
</dbReference>
<dbReference type="EvolutionaryTrace" id="P35604"/>
<dbReference type="Proteomes" id="UP000009136">
    <property type="component" value="Chromosome 5"/>
</dbReference>
<dbReference type="Bgee" id="ENSBTAG00000005384">
    <property type="expression patterns" value="Expressed in saliva-secreting gland and 105 other cell types or tissues"/>
</dbReference>
<dbReference type="GO" id="GO:0030126">
    <property type="term" value="C:COPI vesicle coat"/>
    <property type="evidence" value="ECO:0000314"/>
    <property type="project" value="UniProtKB"/>
</dbReference>
<dbReference type="GO" id="GO:0000139">
    <property type="term" value="C:Golgi membrane"/>
    <property type="evidence" value="ECO:0007669"/>
    <property type="project" value="UniProtKB-SubCell"/>
</dbReference>
<dbReference type="GO" id="GO:0006891">
    <property type="term" value="P:intra-Golgi vesicle-mediated transport"/>
    <property type="evidence" value="ECO:0000314"/>
    <property type="project" value="UniProtKB"/>
</dbReference>
<dbReference type="GO" id="GO:0006886">
    <property type="term" value="P:intracellular protein transport"/>
    <property type="evidence" value="ECO:0000318"/>
    <property type="project" value="GO_Central"/>
</dbReference>
<dbReference type="GO" id="GO:0006890">
    <property type="term" value="P:retrograde vesicle-mediated transport, Golgi to endoplasmic reticulum"/>
    <property type="evidence" value="ECO:0000318"/>
    <property type="project" value="GO_Central"/>
</dbReference>
<dbReference type="CDD" id="cd14829">
    <property type="entry name" value="Zeta-COP"/>
    <property type="match status" value="1"/>
</dbReference>
<dbReference type="FunFam" id="3.30.450.60:FF:000008">
    <property type="entry name" value="Coatomer subunit zeta-1 isoform 1"/>
    <property type="match status" value="1"/>
</dbReference>
<dbReference type="Gene3D" id="3.30.450.60">
    <property type="match status" value="1"/>
</dbReference>
<dbReference type="InterPro" id="IPR022775">
    <property type="entry name" value="AP_mu_sigma_su"/>
</dbReference>
<dbReference type="InterPro" id="IPR000804">
    <property type="entry name" value="Clathrin_sm-chain_CS"/>
</dbReference>
<dbReference type="InterPro" id="IPR039652">
    <property type="entry name" value="Coatomer_zeta"/>
</dbReference>
<dbReference type="InterPro" id="IPR011012">
    <property type="entry name" value="Longin-like_dom_sf"/>
</dbReference>
<dbReference type="PANTHER" id="PTHR11043:SF2">
    <property type="entry name" value="COATOMER SUBUNIT ZETA-1"/>
    <property type="match status" value="1"/>
</dbReference>
<dbReference type="PANTHER" id="PTHR11043">
    <property type="entry name" value="ZETA-COAT PROTEIN"/>
    <property type="match status" value="1"/>
</dbReference>
<dbReference type="Pfam" id="PF01217">
    <property type="entry name" value="Clat_adaptor_s"/>
    <property type="match status" value="1"/>
</dbReference>
<dbReference type="SUPFAM" id="SSF64356">
    <property type="entry name" value="SNARE-like"/>
    <property type="match status" value="1"/>
</dbReference>
<dbReference type="PROSITE" id="PS00989">
    <property type="entry name" value="CLAT_ADAPTOR_S"/>
    <property type="match status" value="1"/>
</dbReference>
<accession>P35604</accession>
<accession>Q5EA44</accession>
<evidence type="ECO:0000250" key="1"/>
<evidence type="ECO:0000250" key="2">
    <source>
        <dbReference type="UniProtKB" id="P53600"/>
    </source>
</evidence>
<evidence type="ECO:0000250" key="3">
    <source>
        <dbReference type="UniProtKB" id="P61923"/>
    </source>
</evidence>
<evidence type="ECO:0000305" key="4"/>
<evidence type="ECO:0007829" key="5">
    <source>
        <dbReference type="PDB" id="3TJZ"/>
    </source>
</evidence>
<name>COPZ1_BOVIN</name>
<sequence>MEALILEPSLYTVKAILILDNDGDRLFAKYYDDTYPSVKEQKAFEKNIFNKTHRTDSEIALLEGLTVVYKSSIDLYFYVIGSSYENELMLMTVLNCLFDSLSQMLRKNVEKRALLENMEGLFLAVDEIVDGGVILESDPQQVVHRVALRGEDVPLTEQTVSQVLQSAKEQIKWSLLR</sequence>
<keyword id="KW-0002">3D-structure</keyword>
<keyword id="KW-0007">Acetylation</keyword>
<keyword id="KW-0963">Cytoplasm</keyword>
<keyword id="KW-0968">Cytoplasmic vesicle</keyword>
<keyword id="KW-0903">Direct protein sequencing</keyword>
<keyword id="KW-0931">ER-Golgi transport</keyword>
<keyword id="KW-0333">Golgi apparatus</keyword>
<keyword id="KW-0472">Membrane</keyword>
<keyword id="KW-0653">Protein transport</keyword>
<keyword id="KW-1185">Reference proteome</keyword>
<keyword id="KW-0813">Transport</keyword>
<organism>
    <name type="scientific">Bos taurus</name>
    <name type="common">Bovine</name>
    <dbReference type="NCBI Taxonomy" id="9913"/>
    <lineage>
        <taxon>Eukaryota</taxon>
        <taxon>Metazoa</taxon>
        <taxon>Chordata</taxon>
        <taxon>Craniata</taxon>
        <taxon>Vertebrata</taxon>
        <taxon>Euteleostomi</taxon>
        <taxon>Mammalia</taxon>
        <taxon>Eutheria</taxon>
        <taxon>Laurasiatheria</taxon>
        <taxon>Artiodactyla</taxon>
        <taxon>Ruminantia</taxon>
        <taxon>Pecora</taxon>
        <taxon>Bovidae</taxon>
        <taxon>Bovinae</taxon>
        <taxon>Bos</taxon>
    </lineage>
</organism>
<comment type="function">
    <text evidence="2">The coatomer is a cytosolic protein complex that binds to dilysine motifs and reversibly associates with Golgi non-clathrin-coated vesicles, which further mediate biosynthetic protein transport from the ER, via the Golgi up to the trans Golgi network. Coatomer complex is required for budding from Golgi membranes, and is essential for the retrograde Golgi-to-ER transport of dilysine-tagged proteins (By similarity). The zeta subunit may be involved in regulating the coat assembly and, hence, the rate of biosynthetic protein transport due to its association-dissociation properties with the coatomer complex (By similarity).</text>
</comment>
<comment type="subunit">
    <text>Oligomeric complex that consists of at least the alpha, beta, beta', gamma, delta, epsilon and zeta subunits.</text>
</comment>
<comment type="subcellular location">
    <subcellularLocation>
        <location evidence="1">Cytoplasm</location>
    </subcellularLocation>
    <subcellularLocation>
        <location evidence="1">Golgi apparatus membrane</location>
        <topology evidence="1">Peripheral membrane protein</topology>
        <orientation evidence="1">Cytoplasmic side</orientation>
    </subcellularLocation>
    <subcellularLocation>
        <location evidence="1">Cytoplasmic vesicle</location>
        <location evidence="1">COPI-coated vesicle membrane</location>
        <topology evidence="1">Peripheral membrane protein</topology>
        <orientation evidence="1">Cytoplasmic side</orientation>
    </subcellularLocation>
    <text evidence="1">The coatomer is cytoplasmic or polymerized on the cytoplasmic side of the Golgi, as well as on the vesicles/buds originating from it.</text>
</comment>
<comment type="similarity">
    <text evidence="4">Belongs to the adaptor complexes small subunit family.</text>
</comment>
<protein>
    <recommendedName>
        <fullName>Coatomer subunit zeta-1</fullName>
    </recommendedName>
    <alternativeName>
        <fullName>Zeta-1-coat protein</fullName>
        <shortName>Zeta-1 COP</shortName>
    </alternativeName>
</protein>
<feature type="chain" id="PRO_0000193824" description="Coatomer subunit zeta-1">
    <location>
        <begin position="1"/>
        <end position="177"/>
    </location>
</feature>
<feature type="modified residue" description="N-acetylmethionine" evidence="3">
    <location>
        <position position="1"/>
    </location>
</feature>
<feature type="sequence conflict" description="In Ref. 1; CAA53539." evidence="4" ref="1">
    <original>E</original>
    <variation>Q</variation>
    <location>
        <position position="7"/>
    </location>
</feature>
<feature type="strand" evidence="5">
    <location>
        <begin position="13"/>
        <end position="19"/>
    </location>
</feature>
<feature type="strand" evidence="5">
    <location>
        <begin position="25"/>
        <end position="30"/>
    </location>
</feature>
<feature type="strand" evidence="5">
    <location>
        <begin position="32"/>
        <end position="35"/>
    </location>
</feature>
<feature type="helix" evidence="5">
    <location>
        <begin position="38"/>
        <end position="52"/>
    </location>
</feature>
<feature type="strand" evidence="5">
    <location>
        <begin position="59"/>
        <end position="62"/>
    </location>
</feature>
<feature type="strand" evidence="5">
    <location>
        <begin position="65"/>
        <end position="71"/>
    </location>
</feature>
<feature type="strand" evidence="5">
    <location>
        <begin position="76"/>
        <end position="82"/>
    </location>
</feature>
<feature type="helix" evidence="5">
    <location>
        <begin position="87"/>
        <end position="105"/>
    </location>
</feature>
<feature type="helix" evidence="5">
    <location>
        <begin position="111"/>
        <end position="116"/>
    </location>
</feature>
<feature type="helix" evidence="5">
    <location>
        <begin position="118"/>
        <end position="128"/>
    </location>
</feature>
<feature type="helix" evidence="5">
    <location>
        <begin position="139"/>
        <end position="144"/>
    </location>
</feature>